<reference key="1">
    <citation type="journal article" date="2006" name="Genomics">
        <title>Diversity and evolution of conotoxins based on gene expression profiling of Conus litteratus.</title>
        <authorList>
            <person name="Pi C."/>
            <person name="Liu J."/>
            <person name="Peng C."/>
            <person name="Liu Y."/>
            <person name="Jiang X."/>
            <person name="Zhao Y."/>
            <person name="Tang S."/>
            <person name="Wang L."/>
            <person name="Dong M."/>
            <person name="Chen S."/>
            <person name="Xu A."/>
        </authorList>
    </citation>
    <scope>NUCLEOTIDE SEQUENCE [MRNA]</scope>
    <source>
        <tissue>Venom duct</tissue>
    </source>
</reference>
<accession>Q2I2P2</accession>
<dbReference type="EMBL" id="DQ345390">
    <property type="protein sequence ID" value="ABC74998.1"/>
    <property type="molecule type" value="mRNA"/>
</dbReference>
<dbReference type="ConoServer" id="1176">
    <property type="toxin name" value="Contulakin-Lt2 precursor"/>
</dbReference>
<dbReference type="GO" id="GO:0005576">
    <property type="term" value="C:extracellular region"/>
    <property type="evidence" value="ECO:0007669"/>
    <property type="project" value="UniProtKB-SubCell"/>
</dbReference>
<dbReference type="GO" id="GO:0090729">
    <property type="term" value="F:toxin activity"/>
    <property type="evidence" value="ECO:0007669"/>
    <property type="project" value="UniProtKB-KW"/>
</dbReference>
<name>CON2_CONLT</name>
<keyword id="KW-0165">Cleavage on pair of basic residues</keyword>
<keyword id="KW-1015">Disulfide bond</keyword>
<keyword id="KW-1213">G-protein coupled receptor impairing toxin</keyword>
<keyword id="KW-0528">Neurotoxin</keyword>
<keyword id="KW-0964">Secreted</keyword>
<keyword id="KW-0732">Signal</keyword>
<keyword id="KW-0800">Toxin</keyword>
<organism>
    <name type="scientific">Conus litteratus</name>
    <name type="common">Lettered cone</name>
    <dbReference type="NCBI Taxonomy" id="89445"/>
    <lineage>
        <taxon>Eukaryota</taxon>
        <taxon>Metazoa</taxon>
        <taxon>Spiralia</taxon>
        <taxon>Lophotrochozoa</taxon>
        <taxon>Mollusca</taxon>
        <taxon>Gastropoda</taxon>
        <taxon>Caenogastropoda</taxon>
        <taxon>Neogastropoda</taxon>
        <taxon>Conoidea</taxon>
        <taxon>Conidae</taxon>
        <taxon>Conus</taxon>
        <taxon>Elisaconus</taxon>
    </lineage>
</organism>
<protein>
    <recommendedName>
        <fullName>Contulakin-Lt2</fullName>
    </recommendedName>
</protein>
<proteinExistence type="evidence at transcript level"/>
<feature type="signal peptide" evidence="2">
    <location>
        <begin position="1"/>
        <end position="22"/>
    </location>
</feature>
<feature type="propeptide" id="PRO_0000315414" evidence="3">
    <location>
        <begin position="23"/>
        <end position="61"/>
    </location>
</feature>
<feature type="peptide" id="PRO_0000315415" description="Contulakin-Lt2">
    <location>
        <begin position="62"/>
        <end position="75"/>
    </location>
</feature>
<feature type="propeptide" id="PRO_0000315416" evidence="1">
    <location>
        <begin position="76"/>
        <end position="85"/>
    </location>
</feature>
<feature type="disulfide bond" evidence="3">
    <location>
        <begin position="65"/>
        <end position="70"/>
    </location>
</feature>
<evidence type="ECO:0000250" key="1"/>
<evidence type="ECO:0000255" key="2"/>
<evidence type="ECO:0000305" key="3"/>
<sequence length="85" mass="10002">MQMAYWVMVMMMVGITAPLSEGRKLNDAIRGLVPNDLTPQLLQSLVSRRHRVFHLDNTYLKIPICAWKVCPPTPWRRRDLKKRNK</sequence>
<comment type="function">
    <text evidence="1">Acts as an agonist of neurotensin receptors. It binds to human neurotensin type 1 receptor (NTSR1), rat neurotensin types 1 and 2 receptors (NTSR1/NTSR2) and mouse neurotensin type 3 receptor (SORT1) (By similarity).</text>
</comment>
<comment type="subcellular location">
    <subcellularLocation>
        <location evidence="1">Secreted</location>
    </subcellularLocation>
</comment>
<comment type="tissue specificity">
    <text>Expressed by the venom duct.</text>
</comment>
<comment type="domain">
    <text>The cysteine framework is C-C.</text>
</comment>
<comment type="similarity">
    <text evidence="3">Belongs to the conotoxin C superfamily.</text>
</comment>